<feature type="chain" id="PRO_1000121954" description="Chromosomal replication initiator protein DnaA">
    <location>
        <begin position="1"/>
        <end position="484"/>
    </location>
</feature>
<feature type="region of interest" description="Domain I, interacts with DnaA modulators" evidence="1">
    <location>
        <begin position="1"/>
        <end position="73"/>
    </location>
</feature>
<feature type="region of interest" description="Domain II" evidence="1">
    <location>
        <begin position="73"/>
        <end position="140"/>
    </location>
</feature>
<feature type="region of interest" description="Domain III, AAA+ region" evidence="1">
    <location>
        <begin position="141"/>
        <end position="357"/>
    </location>
</feature>
<feature type="region of interest" description="Domain IV, binds dsDNA" evidence="1">
    <location>
        <begin position="358"/>
        <end position="484"/>
    </location>
</feature>
<feature type="binding site" evidence="1">
    <location>
        <position position="185"/>
    </location>
    <ligand>
        <name>ATP</name>
        <dbReference type="ChEBI" id="CHEBI:30616"/>
    </ligand>
</feature>
<feature type="binding site" evidence="1">
    <location>
        <position position="187"/>
    </location>
    <ligand>
        <name>ATP</name>
        <dbReference type="ChEBI" id="CHEBI:30616"/>
    </ligand>
</feature>
<feature type="binding site" evidence="1">
    <location>
        <position position="188"/>
    </location>
    <ligand>
        <name>ATP</name>
        <dbReference type="ChEBI" id="CHEBI:30616"/>
    </ligand>
</feature>
<feature type="binding site" evidence="1">
    <location>
        <position position="189"/>
    </location>
    <ligand>
        <name>ATP</name>
        <dbReference type="ChEBI" id="CHEBI:30616"/>
    </ligand>
</feature>
<comment type="function">
    <text evidence="1">Plays an essential role in the initiation and regulation of chromosomal replication. ATP-DnaA binds to the origin of replication (oriC) to initiate formation of the DNA replication initiation complex once per cell cycle. Binds the DnaA box (a 9 base pair repeat at the origin) and separates the double-stranded (ds)DNA. Forms a right-handed helical filament on oriC DNA; dsDNA binds to the exterior of the filament while single-stranded (ss)DNA is stabiized in the filament's interior. The ATP-DnaA-oriC complex binds and stabilizes one strand of the AT-rich DNA unwinding element (DUE), permitting loading of DNA polymerase. After initiation quickly degrades to an ADP-DnaA complex that is not apt for DNA replication. Binds acidic phospholipids.</text>
</comment>
<comment type="subunit">
    <text evidence="1">Oligomerizes as a right-handed, spiral filament on DNA at oriC.</text>
</comment>
<comment type="subcellular location">
    <subcellularLocation>
        <location evidence="1">Cytoplasm</location>
    </subcellularLocation>
</comment>
<comment type="domain">
    <text evidence="1">Domain I is involved in oligomerization and binding regulators, domain II is flexibile and of varying length in different bacteria, domain III forms the AAA+ region, while domain IV binds dsDNA.</text>
</comment>
<comment type="similarity">
    <text evidence="1">Belongs to the DnaA family.</text>
</comment>
<reference key="1">
    <citation type="journal article" date="2008" name="PLoS Genet.">
        <title>The genome of Borrelia recurrentis, the agent of deadly louse-borne relapsing fever, is a degraded subset of tick-borne Borrelia duttonii.</title>
        <authorList>
            <person name="Lescot M."/>
            <person name="Audic S."/>
            <person name="Robert C."/>
            <person name="Nguyen T.T."/>
            <person name="Blanc G."/>
            <person name="Cutler S.J."/>
            <person name="Wincker P."/>
            <person name="Couloux A."/>
            <person name="Claverie J.-M."/>
            <person name="Raoult D."/>
            <person name="Drancourt M."/>
        </authorList>
    </citation>
    <scope>NUCLEOTIDE SEQUENCE [LARGE SCALE GENOMIC DNA]</scope>
    <source>
        <strain>A1</strain>
    </source>
</reference>
<gene>
    <name evidence="1" type="primary">dnaA</name>
    <name type="ordered locus">BRE_437</name>
</gene>
<dbReference type="EMBL" id="CP000993">
    <property type="protein sequence ID" value="ACH94673.1"/>
    <property type="molecule type" value="Genomic_DNA"/>
</dbReference>
<dbReference type="RefSeq" id="WP_012538902.1">
    <property type="nucleotide sequence ID" value="NC_011244.1"/>
</dbReference>
<dbReference type="SMR" id="B5RRN9"/>
<dbReference type="KEGG" id="bre:BRE_437"/>
<dbReference type="HOGENOM" id="CLU_026910_3_2_12"/>
<dbReference type="Proteomes" id="UP000000612">
    <property type="component" value="Chromosome"/>
</dbReference>
<dbReference type="GO" id="GO:0005737">
    <property type="term" value="C:cytoplasm"/>
    <property type="evidence" value="ECO:0007669"/>
    <property type="project" value="UniProtKB-SubCell"/>
</dbReference>
<dbReference type="GO" id="GO:0005886">
    <property type="term" value="C:plasma membrane"/>
    <property type="evidence" value="ECO:0007669"/>
    <property type="project" value="TreeGrafter"/>
</dbReference>
<dbReference type="GO" id="GO:0005524">
    <property type="term" value="F:ATP binding"/>
    <property type="evidence" value="ECO:0007669"/>
    <property type="project" value="UniProtKB-UniRule"/>
</dbReference>
<dbReference type="GO" id="GO:0016887">
    <property type="term" value="F:ATP hydrolysis activity"/>
    <property type="evidence" value="ECO:0007669"/>
    <property type="project" value="InterPro"/>
</dbReference>
<dbReference type="GO" id="GO:0003688">
    <property type="term" value="F:DNA replication origin binding"/>
    <property type="evidence" value="ECO:0007669"/>
    <property type="project" value="UniProtKB-UniRule"/>
</dbReference>
<dbReference type="GO" id="GO:0008289">
    <property type="term" value="F:lipid binding"/>
    <property type="evidence" value="ECO:0007669"/>
    <property type="project" value="UniProtKB-KW"/>
</dbReference>
<dbReference type="GO" id="GO:0006270">
    <property type="term" value="P:DNA replication initiation"/>
    <property type="evidence" value="ECO:0007669"/>
    <property type="project" value="UniProtKB-UniRule"/>
</dbReference>
<dbReference type="GO" id="GO:0006275">
    <property type="term" value="P:regulation of DNA replication"/>
    <property type="evidence" value="ECO:0007669"/>
    <property type="project" value="UniProtKB-UniRule"/>
</dbReference>
<dbReference type="CDD" id="cd00009">
    <property type="entry name" value="AAA"/>
    <property type="match status" value="1"/>
</dbReference>
<dbReference type="CDD" id="cd06571">
    <property type="entry name" value="Bac_DnaA_C"/>
    <property type="match status" value="1"/>
</dbReference>
<dbReference type="FunFam" id="3.40.50.300:FF:000668">
    <property type="entry name" value="Chromosomal replication initiator protein DnaA"/>
    <property type="match status" value="1"/>
</dbReference>
<dbReference type="Gene3D" id="1.10.1750.10">
    <property type="match status" value="1"/>
</dbReference>
<dbReference type="Gene3D" id="1.10.8.60">
    <property type="match status" value="1"/>
</dbReference>
<dbReference type="Gene3D" id="3.30.300.180">
    <property type="match status" value="1"/>
</dbReference>
<dbReference type="Gene3D" id="3.40.50.300">
    <property type="entry name" value="P-loop containing nucleotide triphosphate hydrolases"/>
    <property type="match status" value="1"/>
</dbReference>
<dbReference type="HAMAP" id="MF_00377">
    <property type="entry name" value="DnaA_bact"/>
    <property type="match status" value="1"/>
</dbReference>
<dbReference type="InterPro" id="IPR003593">
    <property type="entry name" value="AAA+_ATPase"/>
</dbReference>
<dbReference type="InterPro" id="IPR001957">
    <property type="entry name" value="Chromosome_initiator_DnaA"/>
</dbReference>
<dbReference type="InterPro" id="IPR020591">
    <property type="entry name" value="Chromosome_initiator_DnaA-like"/>
</dbReference>
<dbReference type="InterPro" id="IPR018312">
    <property type="entry name" value="Chromosome_initiator_DnaA_CS"/>
</dbReference>
<dbReference type="InterPro" id="IPR013159">
    <property type="entry name" value="DnaA_C"/>
</dbReference>
<dbReference type="InterPro" id="IPR013317">
    <property type="entry name" value="DnaA_dom"/>
</dbReference>
<dbReference type="InterPro" id="IPR024633">
    <property type="entry name" value="DnaA_N_dom"/>
</dbReference>
<dbReference type="InterPro" id="IPR038454">
    <property type="entry name" value="DnaA_N_sf"/>
</dbReference>
<dbReference type="InterPro" id="IPR027417">
    <property type="entry name" value="P-loop_NTPase"/>
</dbReference>
<dbReference type="InterPro" id="IPR010921">
    <property type="entry name" value="Trp_repressor/repl_initiator"/>
</dbReference>
<dbReference type="NCBIfam" id="TIGR00362">
    <property type="entry name" value="DnaA"/>
    <property type="match status" value="1"/>
</dbReference>
<dbReference type="PANTHER" id="PTHR30050">
    <property type="entry name" value="CHROMOSOMAL REPLICATION INITIATOR PROTEIN DNAA"/>
    <property type="match status" value="1"/>
</dbReference>
<dbReference type="PANTHER" id="PTHR30050:SF2">
    <property type="entry name" value="CHROMOSOMAL REPLICATION INITIATOR PROTEIN DNAA"/>
    <property type="match status" value="1"/>
</dbReference>
<dbReference type="Pfam" id="PF00308">
    <property type="entry name" value="Bac_DnaA"/>
    <property type="match status" value="1"/>
</dbReference>
<dbReference type="Pfam" id="PF08299">
    <property type="entry name" value="Bac_DnaA_C"/>
    <property type="match status" value="1"/>
</dbReference>
<dbReference type="Pfam" id="PF11638">
    <property type="entry name" value="DnaA_N"/>
    <property type="match status" value="1"/>
</dbReference>
<dbReference type="PRINTS" id="PR00051">
    <property type="entry name" value="DNAA"/>
</dbReference>
<dbReference type="SMART" id="SM00382">
    <property type="entry name" value="AAA"/>
    <property type="match status" value="1"/>
</dbReference>
<dbReference type="SMART" id="SM00760">
    <property type="entry name" value="Bac_DnaA_C"/>
    <property type="match status" value="1"/>
</dbReference>
<dbReference type="SUPFAM" id="SSF52540">
    <property type="entry name" value="P-loop containing nucleoside triphosphate hydrolases"/>
    <property type="match status" value="1"/>
</dbReference>
<dbReference type="SUPFAM" id="SSF48295">
    <property type="entry name" value="TrpR-like"/>
    <property type="match status" value="1"/>
</dbReference>
<dbReference type="PROSITE" id="PS01008">
    <property type="entry name" value="DNAA"/>
    <property type="match status" value="1"/>
</dbReference>
<keyword id="KW-0067">ATP-binding</keyword>
<keyword id="KW-0963">Cytoplasm</keyword>
<keyword id="KW-0235">DNA replication</keyword>
<keyword id="KW-0238">DNA-binding</keyword>
<keyword id="KW-0446">Lipid-binding</keyword>
<keyword id="KW-0547">Nucleotide-binding</keyword>
<accession>B5RRN9</accession>
<sequence>MQEGKNIWSLILAAIRKELSEEEFYIWFENLYFIDAIGENIKIATPNSFHKNQVEKRFSKRIKEILIEKGHSTINVEFIHSQNELKDHNTESKDIPLKAITHQQDLQTKNKDIKTHAKNIINNTKQYSIKEEIHIKYRNPFLKKKYTFENFIIGTNNKLAYNASLSIAKNPGKKYNPCLIYGGVGLGKTHLLQSIGNKTEELHKEFKILYVTAENFLNEFVESIKTNETKRFKKKYRHLDMLLLDDIHDLQKKEGIQEELFHTFNALYEDNKQMVFTCDRQPSELVNFTDRLKSRFTRGLNVDISKPNFELRVAIIEKKAEEDGIKVPKNILNLVAKKVTTNIRDLEAAVTKLKAHIDLEDIEIDTNIVDKIIKEIIAYENDHTNTPNKINIENIKKVILRELKLTNKDIEGNSKKPEITKARHIYAYLLRNFTELSTIEIGKIIGGKTHSTVLYSINKIDKDRNKNLEINNLIIELMNKINKN</sequence>
<evidence type="ECO:0000255" key="1">
    <source>
        <dbReference type="HAMAP-Rule" id="MF_00377"/>
    </source>
</evidence>
<proteinExistence type="inferred from homology"/>
<organism>
    <name type="scientific">Borrelia recurrentis (strain A1)</name>
    <dbReference type="NCBI Taxonomy" id="412418"/>
    <lineage>
        <taxon>Bacteria</taxon>
        <taxon>Pseudomonadati</taxon>
        <taxon>Spirochaetota</taxon>
        <taxon>Spirochaetia</taxon>
        <taxon>Spirochaetales</taxon>
        <taxon>Borreliaceae</taxon>
        <taxon>Borrelia</taxon>
    </lineage>
</organism>
<protein>
    <recommendedName>
        <fullName evidence="1">Chromosomal replication initiator protein DnaA</fullName>
    </recommendedName>
</protein>
<name>DNAA_BORRA</name>